<protein>
    <recommendedName>
        <fullName evidence="1">DNA-directed RNA polymerase subunit alpha</fullName>
        <shortName evidence="1">RNAP subunit alpha</shortName>
        <ecNumber evidence="1">2.7.7.6</ecNumber>
    </recommendedName>
    <alternativeName>
        <fullName evidence="1">RNA polymerase subunit alpha</fullName>
    </alternativeName>
    <alternativeName>
        <fullName evidence="1">Transcriptase subunit alpha</fullName>
    </alternativeName>
</protein>
<feature type="chain" id="PRO_1000196629" description="DNA-directed RNA polymerase subunit alpha">
    <location>
        <begin position="1"/>
        <end position="338"/>
    </location>
</feature>
<feature type="region of interest" description="Alpha N-terminal domain (alpha-NTD)" evidence="1">
    <location>
        <begin position="1"/>
        <end position="234"/>
    </location>
</feature>
<feature type="region of interest" description="Alpha C-terminal domain (alpha-CTD)" evidence="1">
    <location>
        <begin position="250"/>
        <end position="338"/>
    </location>
</feature>
<reference key="1">
    <citation type="journal article" date="2010" name="J. Bacteriol.">
        <title>The genetic basis of laboratory adaptation in Caulobacter crescentus.</title>
        <authorList>
            <person name="Marks M.E."/>
            <person name="Castro-Rojas C.M."/>
            <person name="Teiling C."/>
            <person name="Du L."/>
            <person name="Kapatral V."/>
            <person name="Walunas T.L."/>
            <person name="Crosson S."/>
        </authorList>
    </citation>
    <scope>NUCLEOTIDE SEQUENCE [LARGE SCALE GENOMIC DNA]</scope>
    <source>
        <strain>NA1000 / CB15N</strain>
    </source>
</reference>
<dbReference type="EC" id="2.7.7.6" evidence="1"/>
<dbReference type="EMBL" id="CP001340">
    <property type="protein sequence ID" value="ACL94795.1"/>
    <property type="molecule type" value="Genomic_DNA"/>
</dbReference>
<dbReference type="RefSeq" id="WP_010919151.1">
    <property type="nucleotide sequence ID" value="NC_011916.1"/>
</dbReference>
<dbReference type="RefSeq" id="YP_002516703.1">
    <property type="nucleotide sequence ID" value="NC_011916.1"/>
</dbReference>
<dbReference type="PDB" id="7YE1">
    <property type="method" value="EM"/>
    <property type="resolution" value="3.70 A"/>
    <property type="chains" value="A/B=1-338"/>
</dbReference>
<dbReference type="PDB" id="7YE2">
    <property type="method" value="EM"/>
    <property type="resolution" value="3.80 A"/>
    <property type="chains" value="A/B=1-338"/>
</dbReference>
<dbReference type="PDBsum" id="7YE1"/>
<dbReference type="PDBsum" id="7YE2"/>
<dbReference type="EMDB" id="EMD-33761"/>
<dbReference type="EMDB" id="EMD-33762"/>
<dbReference type="SMR" id="B8H4F8"/>
<dbReference type="GeneID" id="7331785"/>
<dbReference type="KEGG" id="ccs:CCNA_01330"/>
<dbReference type="PATRIC" id="fig|565050.3.peg.1314"/>
<dbReference type="HOGENOM" id="CLU_053084_0_0_5"/>
<dbReference type="OrthoDB" id="9805706at2"/>
<dbReference type="PhylomeDB" id="B8H4F8"/>
<dbReference type="Proteomes" id="UP000001364">
    <property type="component" value="Chromosome"/>
</dbReference>
<dbReference type="GO" id="GO:0005737">
    <property type="term" value="C:cytoplasm"/>
    <property type="evidence" value="ECO:0007669"/>
    <property type="project" value="UniProtKB-ARBA"/>
</dbReference>
<dbReference type="GO" id="GO:0000428">
    <property type="term" value="C:DNA-directed RNA polymerase complex"/>
    <property type="evidence" value="ECO:0007669"/>
    <property type="project" value="UniProtKB-KW"/>
</dbReference>
<dbReference type="GO" id="GO:0003677">
    <property type="term" value="F:DNA binding"/>
    <property type="evidence" value="ECO:0007669"/>
    <property type="project" value="UniProtKB-UniRule"/>
</dbReference>
<dbReference type="GO" id="GO:0003899">
    <property type="term" value="F:DNA-directed RNA polymerase activity"/>
    <property type="evidence" value="ECO:0007669"/>
    <property type="project" value="UniProtKB-UniRule"/>
</dbReference>
<dbReference type="GO" id="GO:0046983">
    <property type="term" value="F:protein dimerization activity"/>
    <property type="evidence" value="ECO:0007669"/>
    <property type="project" value="InterPro"/>
</dbReference>
<dbReference type="GO" id="GO:0006351">
    <property type="term" value="P:DNA-templated transcription"/>
    <property type="evidence" value="ECO:0007669"/>
    <property type="project" value="UniProtKB-UniRule"/>
</dbReference>
<dbReference type="CDD" id="cd06928">
    <property type="entry name" value="RNAP_alpha_NTD"/>
    <property type="match status" value="1"/>
</dbReference>
<dbReference type="FunFam" id="1.10.150.20:FF:000001">
    <property type="entry name" value="DNA-directed RNA polymerase subunit alpha"/>
    <property type="match status" value="1"/>
</dbReference>
<dbReference type="FunFam" id="2.170.120.12:FF:000001">
    <property type="entry name" value="DNA-directed RNA polymerase subunit alpha"/>
    <property type="match status" value="1"/>
</dbReference>
<dbReference type="Gene3D" id="1.10.150.20">
    <property type="entry name" value="5' to 3' exonuclease, C-terminal subdomain"/>
    <property type="match status" value="1"/>
</dbReference>
<dbReference type="Gene3D" id="2.170.120.12">
    <property type="entry name" value="DNA-directed RNA polymerase, insert domain"/>
    <property type="match status" value="1"/>
</dbReference>
<dbReference type="Gene3D" id="3.30.1360.10">
    <property type="entry name" value="RNA polymerase, RBP11-like subunit"/>
    <property type="match status" value="1"/>
</dbReference>
<dbReference type="HAMAP" id="MF_00059">
    <property type="entry name" value="RNApol_bact_RpoA"/>
    <property type="match status" value="1"/>
</dbReference>
<dbReference type="InterPro" id="IPR011262">
    <property type="entry name" value="DNA-dir_RNA_pol_insert"/>
</dbReference>
<dbReference type="InterPro" id="IPR011263">
    <property type="entry name" value="DNA-dir_RNA_pol_RpoA/D/Rpb3"/>
</dbReference>
<dbReference type="InterPro" id="IPR011773">
    <property type="entry name" value="DNA-dir_RpoA"/>
</dbReference>
<dbReference type="InterPro" id="IPR036603">
    <property type="entry name" value="RBP11-like"/>
</dbReference>
<dbReference type="InterPro" id="IPR011260">
    <property type="entry name" value="RNAP_asu_C"/>
</dbReference>
<dbReference type="InterPro" id="IPR036643">
    <property type="entry name" value="RNApol_insert_sf"/>
</dbReference>
<dbReference type="NCBIfam" id="NF003513">
    <property type="entry name" value="PRK05182.1-2"/>
    <property type="match status" value="1"/>
</dbReference>
<dbReference type="NCBIfam" id="NF003519">
    <property type="entry name" value="PRK05182.2-5"/>
    <property type="match status" value="1"/>
</dbReference>
<dbReference type="NCBIfam" id="TIGR02027">
    <property type="entry name" value="rpoA"/>
    <property type="match status" value="1"/>
</dbReference>
<dbReference type="Pfam" id="PF01000">
    <property type="entry name" value="RNA_pol_A_bac"/>
    <property type="match status" value="1"/>
</dbReference>
<dbReference type="Pfam" id="PF03118">
    <property type="entry name" value="RNA_pol_A_CTD"/>
    <property type="match status" value="1"/>
</dbReference>
<dbReference type="Pfam" id="PF01193">
    <property type="entry name" value="RNA_pol_L"/>
    <property type="match status" value="1"/>
</dbReference>
<dbReference type="SMART" id="SM00662">
    <property type="entry name" value="RPOLD"/>
    <property type="match status" value="1"/>
</dbReference>
<dbReference type="SUPFAM" id="SSF47789">
    <property type="entry name" value="C-terminal domain of RNA polymerase alpha subunit"/>
    <property type="match status" value="1"/>
</dbReference>
<dbReference type="SUPFAM" id="SSF56553">
    <property type="entry name" value="Insert subdomain of RNA polymerase alpha subunit"/>
    <property type="match status" value="1"/>
</dbReference>
<dbReference type="SUPFAM" id="SSF55257">
    <property type="entry name" value="RBP11-like subunits of RNA polymerase"/>
    <property type="match status" value="1"/>
</dbReference>
<sequence length="338" mass="37273">MIERNWNELIRPEKPQIETGADATRKARIVAEPLERGFGVTLGNALRRVLLSSLQGAAVTAIQIDGVVHEFSSLEGVREDVVDIVLNIKQLAVRMHAEGPKRMTLRATGPGPVTAGQIETPADIEILNPDHVLCTLDDGASVRMEFTVNNGKGYVPADRNRPEDAPIGLIAVDALYSPVKRVAYRVEPTRQGQSLDYDKLILEVETNGAVTPVDAVAYAARILQDQLQIFITFEEPKAKSADESKPELPFNPALLKKVDELELSVRSANCLKNDNIVYIGDLIQKTEAEMLRTPNFGRKSLNEIKEVLAGMGLHLGMDVPNWPPENIEDLAKKFEDQI</sequence>
<accession>B8H4F8</accession>
<name>RPOA_CAUVN</name>
<proteinExistence type="evidence at protein level"/>
<gene>
    <name evidence="1" type="primary">rpoA</name>
    <name type="ordered locus">CCNA_01330</name>
</gene>
<organism>
    <name type="scientific">Caulobacter vibrioides (strain NA1000 / CB15N)</name>
    <name type="common">Caulobacter crescentus</name>
    <dbReference type="NCBI Taxonomy" id="565050"/>
    <lineage>
        <taxon>Bacteria</taxon>
        <taxon>Pseudomonadati</taxon>
        <taxon>Pseudomonadota</taxon>
        <taxon>Alphaproteobacteria</taxon>
        <taxon>Caulobacterales</taxon>
        <taxon>Caulobacteraceae</taxon>
        <taxon>Caulobacter</taxon>
    </lineage>
</organism>
<evidence type="ECO:0000255" key="1">
    <source>
        <dbReference type="HAMAP-Rule" id="MF_00059"/>
    </source>
</evidence>
<keyword id="KW-0002">3D-structure</keyword>
<keyword id="KW-0240">DNA-directed RNA polymerase</keyword>
<keyword id="KW-0548">Nucleotidyltransferase</keyword>
<keyword id="KW-1185">Reference proteome</keyword>
<keyword id="KW-0804">Transcription</keyword>
<keyword id="KW-0808">Transferase</keyword>
<comment type="function">
    <text evidence="1">DNA-dependent RNA polymerase catalyzes the transcription of DNA into RNA using the four ribonucleoside triphosphates as substrates.</text>
</comment>
<comment type="catalytic activity">
    <reaction evidence="1">
        <text>RNA(n) + a ribonucleoside 5'-triphosphate = RNA(n+1) + diphosphate</text>
        <dbReference type="Rhea" id="RHEA:21248"/>
        <dbReference type="Rhea" id="RHEA-COMP:14527"/>
        <dbReference type="Rhea" id="RHEA-COMP:17342"/>
        <dbReference type="ChEBI" id="CHEBI:33019"/>
        <dbReference type="ChEBI" id="CHEBI:61557"/>
        <dbReference type="ChEBI" id="CHEBI:140395"/>
        <dbReference type="EC" id="2.7.7.6"/>
    </reaction>
</comment>
<comment type="subunit">
    <text evidence="1">Homodimer. The RNAP catalytic core consists of 2 alpha, 1 beta, 1 beta' and 1 omega subunit. When a sigma factor is associated with the core the holoenzyme is formed, which can initiate transcription.</text>
</comment>
<comment type="domain">
    <text evidence="1">The N-terminal domain is essential for RNAP assembly and basal transcription, whereas the C-terminal domain is involved in interaction with transcriptional regulators and with upstream promoter elements.</text>
</comment>
<comment type="similarity">
    <text evidence="1">Belongs to the RNA polymerase alpha chain family.</text>
</comment>